<proteinExistence type="inferred from homology"/>
<keyword id="KW-0028">Amino-acid biosynthesis</keyword>
<keyword id="KW-0067">ATP-binding</keyword>
<keyword id="KW-0963">Cytoplasm</keyword>
<keyword id="KW-0368">Histidine biosynthesis</keyword>
<keyword id="KW-0378">Hydrolase</keyword>
<keyword id="KW-0547">Nucleotide-binding</keyword>
<keyword id="KW-1185">Reference proteome</keyword>
<accession>Q2SN16</accession>
<feature type="chain" id="PRO_1000063338" description="Phosphoribosyl-ATP pyrophosphatase">
    <location>
        <begin position="1"/>
        <end position="110"/>
    </location>
</feature>
<comment type="catalytic activity">
    <reaction evidence="1">
        <text>1-(5-phospho-beta-D-ribosyl)-ATP + H2O = 1-(5-phospho-beta-D-ribosyl)-5'-AMP + diphosphate + H(+)</text>
        <dbReference type="Rhea" id="RHEA:22828"/>
        <dbReference type="ChEBI" id="CHEBI:15377"/>
        <dbReference type="ChEBI" id="CHEBI:15378"/>
        <dbReference type="ChEBI" id="CHEBI:33019"/>
        <dbReference type="ChEBI" id="CHEBI:59457"/>
        <dbReference type="ChEBI" id="CHEBI:73183"/>
        <dbReference type="EC" id="3.6.1.31"/>
    </reaction>
</comment>
<comment type="pathway">
    <text evidence="1">Amino-acid biosynthesis; L-histidine biosynthesis; L-histidine from 5-phospho-alpha-D-ribose 1-diphosphate: step 2/9.</text>
</comment>
<comment type="subcellular location">
    <subcellularLocation>
        <location evidence="1">Cytoplasm</location>
    </subcellularLocation>
</comment>
<comment type="similarity">
    <text evidence="1">Belongs to the PRA-PH family.</text>
</comment>
<evidence type="ECO:0000255" key="1">
    <source>
        <dbReference type="HAMAP-Rule" id="MF_01020"/>
    </source>
</evidence>
<name>HIS2_HAHCH</name>
<gene>
    <name evidence="1" type="primary">hisE</name>
    <name type="ordered locus">HCH_01078</name>
</gene>
<sequence>MNDILTQLGKVLEERKLADPDSSYVASLHAKGLNKILEKVGEECTETILAAKDAEQDGSTHNVIYETADLWFHSLVMLSHLNIAPQEIMQELARRFDISGLEEKASRGKK</sequence>
<organism>
    <name type="scientific">Hahella chejuensis (strain KCTC 2396)</name>
    <dbReference type="NCBI Taxonomy" id="349521"/>
    <lineage>
        <taxon>Bacteria</taxon>
        <taxon>Pseudomonadati</taxon>
        <taxon>Pseudomonadota</taxon>
        <taxon>Gammaproteobacteria</taxon>
        <taxon>Oceanospirillales</taxon>
        <taxon>Hahellaceae</taxon>
        <taxon>Hahella</taxon>
    </lineage>
</organism>
<reference key="1">
    <citation type="journal article" date="2005" name="Nucleic Acids Res.">
        <title>Genomic blueprint of Hahella chejuensis, a marine microbe producing an algicidal agent.</title>
        <authorList>
            <person name="Jeong H."/>
            <person name="Yim J.H."/>
            <person name="Lee C."/>
            <person name="Choi S.-H."/>
            <person name="Park Y.K."/>
            <person name="Yoon S.H."/>
            <person name="Hur C.-G."/>
            <person name="Kang H.-Y."/>
            <person name="Kim D."/>
            <person name="Lee H.H."/>
            <person name="Park K.H."/>
            <person name="Park S.-H."/>
            <person name="Park H.-S."/>
            <person name="Lee H.K."/>
            <person name="Oh T.K."/>
            <person name="Kim J.F."/>
        </authorList>
    </citation>
    <scope>NUCLEOTIDE SEQUENCE [LARGE SCALE GENOMIC DNA]</scope>
    <source>
        <strain>KCTC 2396</strain>
    </source>
</reference>
<dbReference type="EC" id="3.6.1.31" evidence="1"/>
<dbReference type="EMBL" id="CP000155">
    <property type="protein sequence ID" value="ABC27958.1"/>
    <property type="molecule type" value="Genomic_DNA"/>
</dbReference>
<dbReference type="RefSeq" id="WP_011395033.1">
    <property type="nucleotide sequence ID" value="NC_007645.1"/>
</dbReference>
<dbReference type="SMR" id="Q2SN16"/>
<dbReference type="STRING" id="349521.HCH_01078"/>
<dbReference type="KEGG" id="hch:HCH_01078"/>
<dbReference type="eggNOG" id="COG0140">
    <property type="taxonomic scope" value="Bacteria"/>
</dbReference>
<dbReference type="HOGENOM" id="CLU_123337_1_2_6"/>
<dbReference type="UniPathway" id="UPA00031">
    <property type="reaction ID" value="UER00007"/>
</dbReference>
<dbReference type="Proteomes" id="UP000000238">
    <property type="component" value="Chromosome"/>
</dbReference>
<dbReference type="GO" id="GO:0005737">
    <property type="term" value="C:cytoplasm"/>
    <property type="evidence" value="ECO:0007669"/>
    <property type="project" value="UniProtKB-SubCell"/>
</dbReference>
<dbReference type="GO" id="GO:0005524">
    <property type="term" value="F:ATP binding"/>
    <property type="evidence" value="ECO:0007669"/>
    <property type="project" value="UniProtKB-KW"/>
</dbReference>
<dbReference type="GO" id="GO:0004636">
    <property type="term" value="F:phosphoribosyl-ATP diphosphatase activity"/>
    <property type="evidence" value="ECO:0007669"/>
    <property type="project" value="UniProtKB-UniRule"/>
</dbReference>
<dbReference type="GO" id="GO:0000105">
    <property type="term" value="P:L-histidine biosynthetic process"/>
    <property type="evidence" value="ECO:0007669"/>
    <property type="project" value="UniProtKB-UniRule"/>
</dbReference>
<dbReference type="CDD" id="cd11534">
    <property type="entry name" value="NTP-PPase_HisIE_like"/>
    <property type="match status" value="1"/>
</dbReference>
<dbReference type="Gene3D" id="1.10.287.1080">
    <property type="entry name" value="MazG-like"/>
    <property type="match status" value="1"/>
</dbReference>
<dbReference type="HAMAP" id="MF_01020">
    <property type="entry name" value="HisE"/>
    <property type="match status" value="1"/>
</dbReference>
<dbReference type="InterPro" id="IPR008179">
    <property type="entry name" value="HisE"/>
</dbReference>
<dbReference type="InterPro" id="IPR021130">
    <property type="entry name" value="PRib-ATP_PPHydrolase-like"/>
</dbReference>
<dbReference type="NCBIfam" id="TIGR03188">
    <property type="entry name" value="histidine_hisI"/>
    <property type="match status" value="1"/>
</dbReference>
<dbReference type="NCBIfam" id="NF001611">
    <property type="entry name" value="PRK00400.1-3"/>
    <property type="match status" value="1"/>
</dbReference>
<dbReference type="PANTHER" id="PTHR42945">
    <property type="entry name" value="HISTIDINE BIOSYNTHESIS BIFUNCTIONAL PROTEIN"/>
    <property type="match status" value="1"/>
</dbReference>
<dbReference type="PANTHER" id="PTHR42945:SF9">
    <property type="entry name" value="HISTIDINE BIOSYNTHESIS BIFUNCTIONAL PROTEIN HISIE"/>
    <property type="match status" value="1"/>
</dbReference>
<dbReference type="Pfam" id="PF01503">
    <property type="entry name" value="PRA-PH"/>
    <property type="match status" value="1"/>
</dbReference>
<dbReference type="SUPFAM" id="SSF101386">
    <property type="entry name" value="all-alpha NTP pyrophosphatases"/>
    <property type="match status" value="1"/>
</dbReference>
<protein>
    <recommendedName>
        <fullName evidence="1">Phosphoribosyl-ATP pyrophosphatase</fullName>
        <shortName evidence="1">PRA-PH</shortName>
        <ecNumber evidence="1">3.6.1.31</ecNumber>
    </recommendedName>
</protein>